<keyword id="KW-0503">Monooxygenase</keyword>
<keyword id="KW-0560">Oxidoreductase</keyword>
<keyword id="KW-1185">Reference proteome</keyword>
<dbReference type="EC" id="1.-.-.-" evidence="5"/>
<dbReference type="EMBL" id="KC145148">
    <property type="protein sequence ID" value="AGO59045.1"/>
    <property type="molecule type" value="Genomic_DNA"/>
</dbReference>
<dbReference type="EMBL" id="KI912116">
    <property type="protein sequence ID" value="ETS76956.1"/>
    <property type="molecule type" value="Genomic_DNA"/>
</dbReference>
<dbReference type="RefSeq" id="XP_007837602.1">
    <property type="nucleotide sequence ID" value="XM_007839411.1"/>
</dbReference>
<dbReference type="SMR" id="A0A067XNI6"/>
<dbReference type="STRING" id="1229662.A0A067XNI6"/>
<dbReference type="GeneID" id="19275843"/>
<dbReference type="KEGG" id="pfy:PFICI_10830"/>
<dbReference type="eggNOG" id="ENOG502S4YD">
    <property type="taxonomic scope" value="Eukaryota"/>
</dbReference>
<dbReference type="InParanoid" id="A0A067XNI6"/>
<dbReference type="OMA" id="WTNEYAI"/>
<dbReference type="OrthoDB" id="3758478at2759"/>
<dbReference type="Proteomes" id="UP000030651">
    <property type="component" value="Unassembled WGS sequence"/>
</dbReference>
<dbReference type="GO" id="GO:0004497">
    <property type="term" value="F:monooxygenase activity"/>
    <property type="evidence" value="ECO:0007669"/>
    <property type="project" value="UniProtKB-KW"/>
</dbReference>
<dbReference type="Gene3D" id="3.10.450.50">
    <property type="match status" value="1"/>
</dbReference>
<dbReference type="InterPro" id="IPR050977">
    <property type="entry name" value="Fungal_Meroterpenoid_Isomerase"/>
</dbReference>
<dbReference type="InterPro" id="IPR032710">
    <property type="entry name" value="NTF2-like_dom_sf"/>
</dbReference>
<dbReference type="PANTHER" id="PTHR39598:SF1">
    <property type="entry name" value="AUSTINOID BIOSYNTHESIS CLUSTERS PROTEIN F-RELATED"/>
    <property type="match status" value="1"/>
</dbReference>
<dbReference type="PANTHER" id="PTHR39598">
    <property type="entry name" value="AUSTINOL SYNTHESIS PROTEIN F-RELATED"/>
    <property type="match status" value="1"/>
</dbReference>
<dbReference type="SUPFAM" id="SSF54427">
    <property type="entry name" value="NTF2-like"/>
    <property type="match status" value="1"/>
</dbReference>
<name>PTAG_PESFW</name>
<comment type="function">
    <text evidence="1">Monooxygenase; part of the gene cluster that mediates the biosynthesis of pestheic acid, a diphenyl ether which is a biosynthetic precursor of the unique chloropupukeananes (PubMed:24302702). The biosynthesis initiates from condensation of acetate and malonate units catalyzed by the non-reducing PKS ptaA (PubMed:24302702). As the ptaA protein is TE/CLC domain-deficient, hydrolysis and Claisen cyclization of the polyketide could be catalyzed by ptaB containing a beta-lactamase domain (PubMed:24302702). The ptaB protein might hydrolyze the thioester bond between the ACP of ptaA and the intermediate to release atrochrysone carboxylic acid, which is spontaneously dehydrated to form endocrocin anthrone (PubMed:24302702). Endocrocin anthrone is then converted to endocrocin, catalyzed by the anthrone oxygenase ptaC (PubMed:24302702). Spontaneous decarboxylation of endocrocin occurs to generate emodin (PubMed:24302702). An O-methyltransferase (ptaH or ptaI) could methylate emodin to form physcion (PubMed:24302702). PtaJ could then catalyze the oxidative cleavage of physcion, and rotation of the intermediate could then afford desmethylisosulochrin (PubMed:24302702). PtaF, a putative NADH-dependent oxidoreductase, might also participate in the oxidative cleavage step (PubMed:24302702). Desmethylisosulochrin is then transformed by another O-methyltransferase (ptaH or ptaI) to form isosulochrin (PubMed:24302702). Chlorination of isosulochrin by ptaM in the cyclohexadienone B ring then produces chloroisosulochrin (PubMed:24302702). PtaE is responsible for the oxidative coupling reactions of both benzophenones isosulochrin and chloroisosulochrin to RES-1214-1 and pestheic acid respectively, regardless of chlorination.</text>
</comment>
<comment type="pathway">
    <text evidence="5">Secondary metabolite biosynthesis.</text>
</comment>
<comment type="induction">
    <text evidence="2 5">The cluster is expressed in rice fermentation medium (PubMed:25623211). Three regulators are located in the cluster (ptaR1, ptaR2 and ptaR3), suggesting that the production of pestheic acid is controlled by a complex regulatory mechanism (PubMed:24302702).</text>
</comment>
<comment type="similarity">
    <text evidence="4">Belongs to the avfA family.</text>
</comment>
<feature type="chain" id="PRO_0000443046" description="Monooxygenase ptaG">
    <location>
        <begin position="1"/>
        <end position="144"/>
    </location>
</feature>
<reference key="1">
    <citation type="journal article" date="2014" name="ChemBioChem">
        <title>Identification of the first diphenyl ether gene cluster for pestheic acid biosynthesis in plant endophyte Pestalotiopsis fici.</title>
        <authorList>
            <person name="Xu X."/>
            <person name="Liu L."/>
            <person name="Zhang F."/>
            <person name="Wang W."/>
            <person name="Li J."/>
            <person name="Guo L."/>
            <person name="Che Y."/>
            <person name="Liu G."/>
        </authorList>
    </citation>
    <scope>NUCLEOTIDE SEQUENCE [GENOMIC DNA]</scope>
    <scope>FUNCTION</scope>
    <scope>INDUCTION</scope>
    <source>
        <strain>W106-1 / CGMCC3.15140</strain>
    </source>
</reference>
<reference key="2">
    <citation type="journal article" date="2015" name="BMC Genomics">
        <title>Genomic and transcriptomic analysis of the endophytic fungus Pestalotiopsis fici reveals its lifestyle and high potential for synthesis of natural products.</title>
        <authorList>
            <person name="Wang X."/>
            <person name="Zhang X."/>
            <person name="Liu L."/>
            <person name="Xiang M."/>
            <person name="Wang W."/>
            <person name="Sun X."/>
            <person name="Che Y."/>
            <person name="Guo L."/>
            <person name="Liu G."/>
            <person name="Guo L."/>
            <person name="Wang C."/>
            <person name="Yin W.B."/>
            <person name="Stadler M."/>
            <person name="Zhang X."/>
            <person name="Liu X."/>
        </authorList>
    </citation>
    <scope>NUCLEOTIDE SEQUENCE [LARGE SCALE GENOMIC DNA]</scope>
    <scope>INDUCTION</scope>
    <source>
        <strain>W106-1 / CGMCC3.15140</strain>
    </source>
</reference>
<evidence type="ECO:0000269" key="1">
    <source>
    </source>
</evidence>
<evidence type="ECO:0000269" key="2">
    <source>
    </source>
</evidence>
<evidence type="ECO:0000303" key="3">
    <source>
    </source>
</evidence>
<evidence type="ECO:0000305" key="4"/>
<evidence type="ECO:0000305" key="5">
    <source>
    </source>
</evidence>
<protein>
    <recommendedName>
        <fullName evidence="3">Monooxygenase ptaG</fullName>
        <ecNumber evidence="5">1.-.-.-</ecNumber>
    </recommendedName>
    <alternativeName>
        <fullName evidence="3">Pestheic acid biosynthesis cluster protein G</fullName>
    </alternativeName>
</protein>
<sequence>MASTGSAQKETLNKFISGWKNANAEEMLAVASDDYTQQTLPFSLGHDVRPKQVAEVMLPKLYSILENYELKIHQVVHDVENQKAAVYAISKADTPFGFPWLNEFSAFITFNNAGDKVVNVQEMVDTEFFQKFFPAYQSFLSQNK</sequence>
<accession>A0A067XNI6</accession>
<accession>W3WVS7</accession>
<organism>
    <name type="scientific">Pestalotiopsis fici (strain W106-1 / CGMCC3.15140)</name>
    <dbReference type="NCBI Taxonomy" id="1229662"/>
    <lineage>
        <taxon>Eukaryota</taxon>
        <taxon>Fungi</taxon>
        <taxon>Dikarya</taxon>
        <taxon>Ascomycota</taxon>
        <taxon>Pezizomycotina</taxon>
        <taxon>Sordariomycetes</taxon>
        <taxon>Xylariomycetidae</taxon>
        <taxon>Amphisphaeriales</taxon>
        <taxon>Sporocadaceae</taxon>
        <taxon>Pestalotiopsis</taxon>
    </lineage>
</organism>
<gene>
    <name evidence="3" type="primary">ptaG</name>
    <name type="ORF">PFICI_10830</name>
</gene>
<proteinExistence type="evidence at transcript level"/>